<reference key="1">
    <citation type="journal article" date="1987" name="Nucleic Acids Res.">
        <title>Nucleotide sequence and analysis of the coliphage T3 S-adenosylmethionine hydrolase gene and its surrounding ribonuclease III processing sites.</title>
        <authorList>
            <person name="Hughes J.A."/>
            <person name="Brown L.R."/>
            <person name="Ferro A.J."/>
        </authorList>
    </citation>
    <scope>NUCLEOTIDE SEQUENCE [GENOMIC DNA]</scope>
</reference>
<reference key="2">
    <citation type="journal article" date="2002" name="J. Mol. Biol.">
        <title>Complete nucleotide sequence and likely recombinatorial origin of bacteriophage T3.</title>
        <authorList>
            <person name="Pajunen M.I."/>
            <person name="Elizondo M.R."/>
            <person name="Skurnik M."/>
            <person name="Kieleczawa J."/>
            <person name="Molineux I.J."/>
        </authorList>
    </citation>
    <scope>NUCLEOTIDE SEQUENCE [GENOMIC DNA]</scope>
    <source>
        <strain evidence="7">Luria</strain>
    </source>
</reference>
<reference key="3">
    <citation type="submission" date="2013-04" db="EMBL/GenBank/DDBJ databases">
        <title>Resequencing of Bacteriophage T3.</title>
        <authorList>
            <person name="Li S."/>
        </authorList>
    </citation>
    <scope>NUCLEOTIDE SEQUENCE [GENOMIC DNA]</scope>
</reference>
<reference key="4">
    <citation type="journal article" date="1966" name="J. Biol. Chem.">
        <title>The enzymatic methylation of ribonucleic acid and deoxyribonucleic acid. X. Bacteriophage T3-induced S-adenosylmethionine cleavage.</title>
        <authorList>
            <person name="Gefter M."/>
            <person name="Hausmann R."/>
            <person name="Gold M."/>
            <person name="Hurwitz J."/>
        </authorList>
    </citation>
    <scope>INDUCTION</scope>
    <scope>FUNCTION</scope>
</reference>
<reference key="5">
    <citation type="journal article" date="1975" name="J. Virol.">
        <title>Biological functions of the bacteriophage T3 SAMase gene.</title>
        <authorList>
            <person name="Krueger D.H."/>
            <person name="Presber W."/>
            <person name="Hansen S."/>
            <person name="Rosenthal H.A."/>
        </authorList>
    </citation>
    <scope>FUNCTION</scope>
</reference>
<reference key="6">
    <citation type="journal article" date="2021" name="Elife">
        <title>Structure and mechanism of a phage-encoded SAM lyase revises catalytic function of enzyme family.</title>
        <authorList>
            <person name="Guo X."/>
            <person name="Soederholm A."/>
            <person name="Kanchugal P.S."/>
            <person name="Isaksen G.V."/>
            <person name="Warsi O."/>
            <person name="Eckhard U."/>
            <person name="Trigueis S."/>
            <person name="Gogoll A."/>
            <person name="Jerlstroem-Hultqvist J."/>
            <person name="Aaqvist J."/>
            <person name="Andersson D.I."/>
            <person name="Selmer M."/>
        </authorList>
    </citation>
    <scope>CATALYTIC ACTIVITY</scope>
    <scope>FUNCTION</scope>
    <scope>MUTAGENESIS OF GLU-67 AND GLU-68</scope>
</reference>
<reference key="7">
    <citation type="journal article" date="2021" name="MBio">
        <title>SAMase of Bacteriophage T3 Inactivates Escherichia coli's Methionine S-Adenosyltransferase by Forming Heteropolymers.</title>
        <authorList>
            <person name="Simon-Baram H."/>
            <person name="Kleiner D."/>
            <person name="Shmulevich F."/>
            <person name="Zarivach R."/>
            <person name="Zalk R."/>
            <person name="Tang H."/>
            <person name="Ding F."/>
            <person name="Bershtein S."/>
        </authorList>
    </citation>
    <scope>STRUCTURE BY ELECTRON MICROSCOPY (3.60 ANGSTROMS)</scope>
    <scope>FUNCTION</scope>
    <scope>INTERACTION WITH HOST METK</scope>
    <scope>CATALYTIC ACTIVITY</scope>
</reference>
<evidence type="ECO:0000269" key="1">
    <source>
    </source>
</evidence>
<evidence type="ECO:0000269" key="2">
    <source>
    </source>
</evidence>
<evidence type="ECO:0000269" key="3">
    <source>
    </source>
</evidence>
<evidence type="ECO:0000269" key="4">
    <source>
    </source>
</evidence>
<evidence type="ECO:0000303" key="5">
    <source>
    </source>
</evidence>
<evidence type="ECO:0000305" key="6"/>
<evidence type="ECO:0000312" key="7">
    <source>
        <dbReference type="EMBL" id="CAC86259.1"/>
    </source>
</evidence>
<feature type="chain" id="PRO_0000106548" description="S-Adenosylmethionine lyase">
    <location>
        <begin position="1"/>
        <end position="152"/>
    </location>
</feature>
<feature type="mutagenesis site" description="No effect on enzymatic activity." evidence="2">
    <original>E</original>
    <variation>Q</variation>
    <location>
        <position position="67"/>
    </location>
</feature>
<feature type="mutagenesis site" description="75% loss of enzymatic activity." evidence="2">
    <original>E</original>
    <variation>Q</variation>
    <location>
        <position position="68"/>
    </location>
</feature>
<feature type="sequence conflict" description="In Ref. 3; AGM10703 and 2; CAC86259." evidence="6" ref="3 2">
    <original>H</original>
    <variation>N</variation>
    <location>
        <position position="9"/>
    </location>
</feature>
<accession>P07693</accession>
<accession>Q8W5V0</accession>
<name>ADOM_BPT3</name>
<organismHost>
    <name type="scientific">Escherichia coli</name>
    <dbReference type="NCBI Taxonomy" id="562"/>
</organismHost>
<protein>
    <recommendedName>
        <fullName evidence="5">S-Adenosylmethionine lyase</fullName>
        <shortName>ADOMetase</shortName>
        <shortName evidence="5">Adenosylmethionine lyase</shortName>
        <shortName>SAMase</shortName>
        <ecNumber evidence="2 3">4.4.1.42</ecNumber>
    </recommendedName>
</protein>
<comment type="function">
    <text evidence="1 2 3 4 5">Degrades the intracellular SAM pools of the host cell and inhibits the host S-adenosylmethionine synthase METK/MAT, thereby preventing methylation of the viral genome (PubMed:33567250, PubMed:34340545, PubMed:5946625). Induces the polymerization of METK into filaments that are enzymatically inactive (PubMed:34340545). Keeping the viral genome in an unmethylated state allows the phage to shift from a lytic infection under normal growth conditions to a transient lysogenic infection under glucose starvation, by blocking its own expression (PubMed:1097737). Does not protect the virus immune against host restriction-modification systems (PubMed:34340545).</text>
</comment>
<comment type="catalytic activity">
    <reaction evidence="2 3">
        <text>S-adenosyl-L-methionine = L-homoserine lactone + S-methyl-5'-thioadenosine</text>
        <dbReference type="Rhea" id="RHEA:21932"/>
        <dbReference type="ChEBI" id="CHEBI:17509"/>
        <dbReference type="ChEBI" id="CHEBI:58633"/>
        <dbReference type="ChEBI" id="CHEBI:59789"/>
        <dbReference type="EC" id="4.4.1.42"/>
    </reaction>
</comment>
<comment type="subunit">
    <text evidence="3">Homotetramer (PubMed:34340545). Interacts with host METK; this interaction induces the polymerization of METK into filaments that are enzymatically inactive (PubMed:34340545).</text>
</comment>
<comment type="induction">
    <text evidence="4">Expressed in the early phase of the viral replicative cycle.</text>
</comment>
<comment type="caution">
    <text evidence="2">Was first thought to be a hydrolase forming 5'-methyl-thioadenosine (MTA) and L-homoserine.</text>
</comment>
<comment type="sequence caution" evidence="6">
    <conflict type="erroneous initiation">
        <sequence resource="EMBL-CDS" id="CAA28478"/>
    </conflict>
</comment>
<organism>
    <name type="scientific">Enterobacteria phage T3</name>
    <name type="common">Bacteriophage T3</name>
    <dbReference type="NCBI Taxonomy" id="10759"/>
    <lineage>
        <taxon>Viruses</taxon>
        <taxon>Duplodnaviria</taxon>
        <taxon>Heunggongvirae</taxon>
        <taxon>Uroviricota</taxon>
        <taxon>Caudoviricetes</taxon>
        <taxon>Autographiviridae</taxon>
        <taxon>Studiervirinae</taxon>
        <taxon>Teetrevirus</taxon>
        <taxon>Teetrevirus T3</taxon>
    </lineage>
</organism>
<dbReference type="EC" id="4.4.1.42" evidence="2 3"/>
<dbReference type="EMBL" id="X04791">
    <property type="protein sequence ID" value="CAA28477.1"/>
    <property type="molecule type" value="Genomic_DNA"/>
</dbReference>
<dbReference type="EMBL" id="X04791">
    <property type="protein sequence ID" value="CAA28478.1"/>
    <property type="status" value="ALT_INIT"/>
    <property type="molecule type" value="Genomic_DNA"/>
</dbReference>
<dbReference type="EMBL" id="AJ318471">
    <property type="protein sequence ID" value="CAC86259.1"/>
    <property type="molecule type" value="Genomic_DNA"/>
</dbReference>
<dbReference type="EMBL" id="KC960671">
    <property type="protein sequence ID" value="AGM10703.1"/>
    <property type="molecule type" value="Genomic_DNA"/>
</dbReference>
<dbReference type="PIR" id="A26441">
    <property type="entry name" value="DABPT3"/>
</dbReference>
<dbReference type="RefSeq" id="NP_523296.1">
    <property type="nucleotide sequence ID" value="NC_003298.1"/>
</dbReference>
<dbReference type="RefSeq" id="NP_523297.1">
    <property type="nucleotide sequence ID" value="NC_003298.1"/>
</dbReference>
<dbReference type="PDB" id="7OCK">
    <property type="method" value="EM"/>
    <property type="resolution" value="3.60 A"/>
    <property type="chains" value="A/J/K/L=1-152"/>
</dbReference>
<dbReference type="PDB" id="8BB1">
    <property type="method" value="EM"/>
    <property type="resolution" value="2.80 A"/>
    <property type="chains" value="E/F/G/H=1-152"/>
</dbReference>
<dbReference type="PDBsum" id="7OCK"/>
<dbReference type="PDBsum" id="8BB1"/>
<dbReference type="EMDB" id="EMD-12809"/>
<dbReference type="EMDB" id="EMD-15953"/>
<dbReference type="SASBDB" id="P07693"/>
<dbReference type="SMR" id="P07693"/>
<dbReference type="GeneID" id="927434"/>
<dbReference type="GeneID" id="927435"/>
<dbReference type="KEGG" id="vg:927434"/>
<dbReference type="KEGG" id="vg:927435"/>
<dbReference type="OrthoDB" id="10899at10239"/>
<dbReference type="BioCyc" id="MetaCyc:MONOMER-124265"/>
<dbReference type="BRENDA" id="4.4.1.B4">
    <property type="organism ID" value="731"/>
</dbReference>
<dbReference type="Proteomes" id="UP000002092">
    <property type="component" value="Genome"/>
</dbReference>
<dbReference type="Proteomes" id="UP000229888">
    <property type="component" value="Genome"/>
</dbReference>
<dbReference type="GO" id="GO:0047625">
    <property type="term" value="F:S-adenosyl-L-methionine lyase activity"/>
    <property type="evidence" value="ECO:0007669"/>
    <property type="project" value="RHEA"/>
</dbReference>
<dbReference type="GO" id="GO:0016740">
    <property type="term" value="F:transferase activity"/>
    <property type="evidence" value="ECO:0007669"/>
    <property type="project" value="UniProtKB-KW"/>
</dbReference>
<dbReference type="InterPro" id="IPR016290">
    <property type="entry name" value="S-AdoMet_lyase"/>
</dbReference>
<dbReference type="Pfam" id="PF23780">
    <property type="entry name" value="S-AdoMet_lyase"/>
    <property type="match status" value="1"/>
</dbReference>
<dbReference type="PIRSF" id="PIRSF001110">
    <property type="entry name" value="SAM_hydrolase"/>
    <property type="match status" value="1"/>
</dbReference>
<keyword id="KW-0002">3D-structure</keyword>
<keyword id="KW-0244">Early protein</keyword>
<keyword id="KW-0945">Host-virus interaction</keyword>
<keyword id="KW-0456">Lyase</keyword>
<keyword id="KW-1185">Reference proteome</keyword>
<keyword id="KW-0949">S-adenosyl-L-methionine</keyword>
<keyword id="KW-0808">Transferase</keyword>
<sequence length="152" mass="17035">MIFTKEPAHVFYVLVSAFRSNLCDEVNMSRHRHMVSTLRAAPGLYGSVESTDLTGCYREAISSAPTEEKTVRVRCKDKAQALNVARLACNEWEQDCVLVYKSQTHTAGLVYAKGIDGYKAERLPGSFQEVPKGAPLQGCFTIDEFGRRWQVQ</sequence>
<proteinExistence type="evidence at protein level"/>